<keyword id="KW-0687">Ribonucleoprotein</keyword>
<keyword id="KW-0689">Ribosomal protein</keyword>
<organism>
    <name type="scientific">Anaplasma phagocytophilum (strain HZ)</name>
    <dbReference type="NCBI Taxonomy" id="212042"/>
    <lineage>
        <taxon>Bacteria</taxon>
        <taxon>Pseudomonadati</taxon>
        <taxon>Pseudomonadota</taxon>
        <taxon>Alphaproteobacteria</taxon>
        <taxon>Rickettsiales</taxon>
        <taxon>Anaplasmataceae</taxon>
        <taxon>Anaplasma</taxon>
        <taxon>phagocytophilum group</taxon>
    </lineage>
</organism>
<dbReference type="EMBL" id="CP000235">
    <property type="protein sequence ID" value="ABD43500.1"/>
    <property type="molecule type" value="Genomic_DNA"/>
</dbReference>
<dbReference type="RefSeq" id="WP_011450414.1">
    <property type="nucleotide sequence ID" value="NC_007797.1"/>
</dbReference>
<dbReference type="SMR" id="Q2GL60"/>
<dbReference type="STRING" id="212042.APH_0279"/>
<dbReference type="PaxDb" id="212042-APH_0279"/>
<dbReference type="EnsemblBacteria" id="ABD43500">
    <property type="protein sequence ID" value="ABD43500"/>
    <property type="gene ID" value="APH_0279"/>
</dbReference>
<dbReference type="GeneID" id="92747524"/>
<dbReference type="KEGG" id="aph:APH_0279"/>
<dbReference type="eggNOG" id="COG0051">
    <property type="taxonomic scope" value="Bacteria"/>
</dbReference>
<dbReference type="HOGENOM" id="CLU_122625_1_3_5"/>
<dbReference type="Proteomes" id="UP000001943">
    <property type="component" value="Chromosome"/>
</dbReference>
<dbReference type="GO" id="GO:1990904">
    <property type="term" value="C:ribonucleoprotein complex"/>
    <property type="evidence" value="ECO:0007669"/>
    <property type="project" value="UniProtKB-KW"/>
</dbReference>
<dbReference type="GO" id="GO:0005840">
    <property type="term" value="C:ribosome"/>
    <property type="evidence" value="ECO:0007669"/>
    <property type="project" value="UniProtKB-KW"/>
</dbReference>
<dbReference type="GO" id="GO:0003735">
    <property type="term" value="F:structural constituent of ribosome"/>
    <property type="evidence" value="ECO:0007669"/>
    <property type="project" value="InterPro"/>
</dbReference>
<dbReference type="GO" id="GO:0000049">
    <property type="term" value="F:tRNA binding"/>
    <property type="evidence" value="ECO:0007669"/>
    <property type="project" value="UniProtKB-UniRule"/>
</dbReference>
<dbReference type="GO" id="GO:0006412">
    <property type="term" value="P:translation"/>
    <property type="evidence" value="ECO:0007669"/>
    <property type="project" value="UniProtKB-UniRule"/>
</dbReference>
<dbReference type="FunFam" id="3.30.70.600:FF:000003">
    <property type="entry name" value="30S ribosomal protein S10"/>
    <property type="match status" value="1"/>
</dbReference>
<dbReference type="Gene3D" id="3.30.70.600">
    <property type="entry name" value="Ribosomal protein S10 domain"/>
    <property type="match status" value="1"/>
</dbReference>
<dbReference type="HAMAP" id="MF_00508">
    <property type="entry name" value="Ribosomal_uS10"/>
    <property type="match status" value="1"/>
</dbReference>
<dbReference type="InterPro" id="IPR001848">
    <property type="entry name" value="Ribosomal_uS10"/>
</dbReference>
<dbReference type="InterPro" id="IPR027486">
    <property type="entry name" value="Ribosomal_uS10_dom"/>
</dbReference>
<dbReference type="InterPro" id="IPR036838">
    <property type="entry name" value="Ribosomal_uS10_dom_sf"/>
</dbReference>
<dbReference type="NCBIfam" id="NF001861">
    <property type="entry name" value="PRK00596.1"/>
    <property type="match status" value="1"/>
</dbReference>
<dbReference type="NCBIfam" id="TIGR01049">
    <property type="entry name" value="rpsJ_bact"/>
    <property type="match status" value="1"/>
</dbReference>
<dbReference type="PANTHER" id="PTHR11700">
    <property type="entry name" value="30S RIBOSOMAL PROTEIN S10 FAMILY MEMBER"/>
    <property type="match status" value="1"/>
</dbReference>
<dbReference type="Pfam" id="PF00338">
    <property type="entry name" value="Ribosomal_S10"/>
    <property type="match status" value="1"/>
</dbReference>
<dbReference type="PRINTS" id="PR00971">
    <property type="entry name" value="RIBOSOMALS10"/>
</dbReference>
<dbReference type="SMART" id="SM01403">
    <property type="entry name" value="Ribosomal_S10"/>
    <property type="match status" value="1"/>
</dbReference>
<dbReference type="SUPFAM" id="SSF54999">
    <property type="entry name" value="Ribosomal protein S10"/>
    <property type="match status" value="1"/>
</dbReference>
<sequence length="105" mass="11735">MVTQKIYIELKAFDHGLLDRSARNIVLVAKRSGAKVNGPIFFPRRTAKFIVNRSTHVDKKSREQFEIRTHKRLISLPKANSAILQALMSLQLPAGVDVKVKVVGG</sequence>
<feature type="chain" id="PRO_0000237010" description="Small ribosomal subunit protein uS10">
    <location>
        <begin position="1"/>
        <end position="105"/>
    </location>
</feature>
<name>RS10_ANAPZ</name>
<evidence type="ECO:0000255" key="1">
    <source>
        <dbReference type="HAMAP-Rule" id="MF_00508"/>
    </source>
</evidence>
<evidence type="ECO:0000305" key="2"/>
<protein>
    <recommendedName>
        <fullName evidence="1">Small ribosomal subunit protein uS10</fullName>
    </recommendedName>
    <alternativeName>
        <fullName evidence="2">30S ribosomal protein S10</fullName>
    </alternativeName>
</protein>
<proteinExistence type="inferred from homology"/>
<reference key="1">
    <citation type="journal article" date="2006" name="PLoS Genet.">
        <title>Comparative genomics of emerging human ehrlichiosis agents.</title>
        <authorList>
            <person name="Dunning Hotopp J.C."/>
            <person name="Lin M."/>
            <person name="Madupu R."/>
            <person name="Crabtree J."/>
            <person name="Angiuoli S.V."/>
            <person name="Eisen J.A."/>
            <person name="Seshadri R."/>
            <person name="Ren Q."/>
            <person name="Wu M."/>
            <person name="Utterback T.R."/>
            <person name="Smith S."/>
            <person name="Lewis M."/>
            <person name="Khouri H."/>
            <person name="Zhang C."/>
            <person name="Niu H."/>
            <person name="Lin Q."/>
            <person name="Ohashi N."/>
            <person name="Zhi N."/>
            <person name="Nelson W.C."/>
            <person name="Brinkac L.M."/>
            <person name="Dodson R.J."/>
            <person name="Rosovitz M.J."/>
            <person name="Sundaram J.P."/>
            <person name="Daugherty S.C."/>
            <person name="Davidsen T."/>
            <person name="Durkin A.S."/>
            <person name="Gwinn M.L."/>
            <person name="Haft D.H."/>
            <person name="Selengut J.D."/>
            <person name="Sullivan S.A."/>
            <person name="Zafar N."/>
            <person name="Zhou L."/>
            <person name="Benahmed F."/>
            <person name="Forberger H."/>
            <person name="Halpin R."/>
            <person name="Mulligan S."/>
            <person name="Robinson J."/>
            <person name="White O."/>
            <person name="Rikihisa Y."/>
            <person name="Tettelin H."/>
        </authorList>
    </citation>
    <scope>NUCLEOTIDE SEQUENCE [LARGE SCALE GENOMIC DNA]</scope>
    <source>
        <strain>HZ</strain>
    </source>
</reference>
<comment type="function">
    <text evidence="1">Involved in the binding of tRNA to the ribosomes.</text>
</comment>
<comment type="subunit">
    <text evidence="1">Part of the 30S ribosomal subunit.</text>
</comment>
<comment type="similarity">
    <text evidence="1">Belongs to the universal ribosomal protein uS10 family.</text>
</comment>
<accession>Q2GL60</accession>
<gene>
    <name evidence="1" type="primary">rpsJ</name>
    <name type="ordered locus">APH_0279</name>
</gene>